<organism>
    <name type="scientific">Aster yellows witches'-broom phytoplasma (strain AYWB)</name>
    <dbReference type="NCBI Taxonomy" id="322098"/>
    <lineage>
        <taxon>Bacteria</taxon>
        <taxon>Bacillati</taxon>
        <taxon>Mycoplasmatota</taxon>
        <taxon>Mollicutes</taxon>
        <taxon>Acholeplasmatales</taxon>
        <taxon>Acholeplasmataceae</taxon>
        <taxon>Candidatus Phytoplasma</taxon>
        <taxon>16SrI (Aster yellows group)</taxon>
    </lineage>
</organism>
<dbReference type="EC" id="6.3.4.19" evidence="1"/>
<dbReference type="EMBL" id="CP000061">
    <property type="protein sequence ID" value="ABC65709.1"/>
    <property type="molecule type" value="Genomic_DNA"/>
</dbReference>
<dbReference type="RefSeq" id="WP_011412871.1">
    <property type="nucleotide sequence ID" value="NC_007716.1"/>
</dbReference>
<dbReference type="SMR" id="Q2NIN4"/>
<dbReference type="STRING" id="322098.AYWB_592"/>
<dbReference type="KEGG" id="ayw:AYWB_592"/>
<dbReference type="eggNOG" id="COG0037">
    <property type="taxonomic scope" value="Bacteria"/>
</dbReference>
<dbReference type="HOGENOM" id="CLU_018869_0_2_14"/>
<dbReference type="OrthoDB" id="9807403at2"/>
<dbReference type="PhylomeDB" id="Q2NIN4"/>
<dbReference type="Proteomes" id="UP000001934">
    <property type="component" value="Chromosome"/>
</dbReference>
<dbReference type="GO" id="GO:0005737">
    <property type="term" value="C:cytoplasm"/>
    <property type="evidence" value="ECO:0007669"/>
    <property type="project" value="UniProtKB-SubCell"/>
</dbReference>
<dbReference type="GO" id="GO:0005524">
    <property type="term" value="F:ATP binding"/>
    <property type="evidence" value="ECO:0007669"/>
    <property type="project" value="UniProtKB-UniRule"/>
</dbReference>
<dbReference type="GO" id="GO:0032267">
    <property type="term" value="F:tRNA(Ile)-lysidine synthase activity"/>
    <property type="evidence" value="ECO:0007669"/>
    <property type="project" value="UniProtKB-EC"/>
</dbReference>
<dbReference type="GO" id="GO:0006400">
    <property type="term" value="P:tRNA modification"/>
    <property type="evidence" value="ECO:0007669"/>
    <property type="project" value="UniProtKB-UniRule"/>
</dbReference>
<dbReference type="CDD" id="cd01992">
    <property type="entry name" value="TilS_N"/>
    <property type="match status" value="1"/>
</dbReference>
<dbReference type="Gene3D" id="3.40.50.620">
    <property type="entry name" value="HUPs"/>
    <property type="match status" value="1"/>
</dbReference>
<dbReference type="HAMAP" id="MF_01161">
    <property type="entry name" value="tRNA_Ile_lys_synt"/>
    <property type="match status" value="1"/>
</dbReference>
<dbReference type="InterPro" id="IPR012796">
    <property type="entry name" value="Lysidine-tRNA-synth_C"/>
</dbReference>
<dbReference type="InterPro" id="IPR014729">
    <property type="entry name" value="Rossmann-like_a/b/a_fold"/>
</dbReference>
<dbReference type="InterPro" id="IPR011063">
    <property type="entry name" value="TilS/TtcA_N"/>
</dbReference>
<dbReference type="InterPro" id="IPR012094">
    <property type="entry name" value="tRNA_Ile_lys_synt"/>
</dbReference>
<dbReference type="InterPro" id="IPR012795">
    <property type="entry name" value="tRNA_Ile_lys_synt_N"/>
</dbReference>
<dbReference type="NCBIfam" id="TIGR02433">
    <property type="entry name" value="lysidine_TilS_C"/>
    <property type="match status" value="1"/>
</dbReference>
<dbReference type="NCBIfam" id="TIGR02432">
    <property type="entry name" value="lysidine_TilS_N"/>
    <property type="match status" value="1"/>
</dbReference>
<dbReference type="PANTHER" id="PTHR43033">
    <property type="entry name" value="TRNA(ILE)-LYSIDINE SYNTHASE-RELATED"/>
    <property type="match status" value="1"/>
</dbReference>
<dbReference type="PANTHER" id="PTHR43033:SF1">
    <property type="entry name" value="TRNA(ILE)-LYSIDINE SYNTHASE-RELATED"/>
    <property type="match status" value="1"/>
</dbReference>
<dbReference type="Pfam" id="PF01171">
    <property type="entry name" value="ATP_bind_3"/>
    <property type="match status" value="1"/>
</dbReference>
<dbReference type="Pfam" id="PF11734">
    <property type="entry name" value="TilS_C"/>
    <property type="match status" value="1"/>
</dbReference>
<dbReference type="SMART" id="SM00977">
    <property type="entry name" value="TilS_C"/>
    <property type="match status" value="1"/>
</dbReference>
<dbReference type="SUPFAM" id="SSF52402">
    <property type="entry name" value="Adenine nucleotide alpha hydrolases-like"/>
    <property type="match status" value="1"/>
</dbReference>
<dbReference type="SUPFAM" id="SSF56037">
    <property type="entry name" value="PheT/TilS domain"/>
    <property type="match status" value="1"/>
</dbReference>
<reference key="1">
    <citation type="journal article" date="2006" name="J. Bacteriol.">
        <title>Living with genome instability: the adaptation of phytoplasmas to diverse environments of their insect and plant hosts.</title>
        <authorList>
            <person name="Bai X."/>
            <person name="Zhang J."/>
            <person name="Ewing A."/>
            <person name="Miller S.A."/>
            <person name="Jancso Radek A."/>
            <person name="Shevchenko D.V."/>
            <person name="Tsukerman K."/>
            <person name="Walunas T."/>
            <person name="Lapidus A."/>
            <person name="Campbell J.W."/>
            <person name="Hogenhout S.A."/>
        </authorList>
    </citation>
    <scope>NUCLEOTIDE SEQUENCE [LARGE SCALE GENOMIC DNA]</scope>
    <source>
        <strain>AYWB</strain>
    </source>
</reference>
<proteinExistence type="inferred from homology"/>
<gene>
    <name evidence="1" type="primary">tilS</name>
    <name type="ordered locus">AYWB_592</name>
</gene>
<comment type="function">
    <text evidence="1">Ligates lysine onto the cytidine present at position 34 of the AUA codon-specific tRNA(Ile) that contains the anticodon CAU, in an ATP-dependent manner. Cytidine is converted to lysidine, thus changing the amino acid specificity of the tRNA from methionine to isoleucine.</text>
</comment>
<comment type="catalytic activity">
    <reaction evidence="1">
        <text>cytidine(34) in tRNA(Ile2) + L-lysine + ATP = lysidine(34) in tRNA(Ile2) + AMP + diphosphate + H(+)</text>
        <dbReference type="Rhea" id="RHEA:43744"/>
        <dbReference type="Rhea" id="RHEA-COMP:10625"/>
        <dbReference type="Rhea" id="RHEA-COMP:10670"/>
        <dbReference type="ChEBI" id="CHEBI:15378"/>
        <dbReference type="ChEBI" id="CHEBI:30616"/>
        <dbReference type="ChEBI" id="CHEBI:32551"/>
        <dbReference type="ChEBI" id="CHEBI:33019"/>
        <dbReference type="ChEBI" id="CHEBI:82748"/>
        <dbReference type="ChEBI" id="CHEBI:83665"/>
        <dbReference type="ChEBI" id="CHEBI:456215"/>
        <dbReference type="EC" id="6.3.4.19"/>
    </reaction>
</comment>
<comment type="subcellular location">
    <subcellularLocation>
        <location evidence="1">Cytoplasm</location>
    </subcellularLocation>
</comment>
<comment type="domain">
    <text>The N-terminal region contains the highly conserved SGGXDS motif, predicted to be a P-loop motif involved in ATP binding.</text>
</comment>
<comment type="similarity">
    <text evidence="1">Belongs to the tRNA(Ile)-lysidine synthase family.</text>
</comment>
<evidence type="ECO:0000255" key="1">
    <source>
        <dbReference type="HAMAP-Rule" id="MF_01161"/>
    </source>
</evidence>
<sequence>MENIKLACSLETNQTYIIAVSGGVDSMALLHYLVAQKIKLQVVHFNHLTNSNTWKNKELVKNYCLQNSLGFHYFELNCPQKNFQAQARLLRQQKLMQIAAKHRTPFILTAHHLDDLAETILQKISRSSTLLGYSGMQIQTSWTDFIFLKPFLYIPKAKIISYAAFYKIPFLEDYTNQKLTYQRNQIRHQVIPYLKTQTSFLQNIQKYQQTLLQAYNFIRKQTLLFLTKHTNHSCNQPNSIALAPFLNLDLVIQKDIILLLLEQKNITQSFIFIQNIIKGINNPYKPNLSWHLNSDWHLIKDYKHIKLMNPALPLPFALTKPLLCVSTCNLCLVCVCPLIETLNYNSQKVSFPLKVRLRQPKDTLKFSFGTKKLKKFLIEKKVPLTQRNNLWLVVDNLDNILFIPQLYTNLTLGNQFRIYLAFKNFFTSSNCFSQTN</sequence>
<accession>Q2NIN4</accession>
<keyword id="KW-0067">ATP-binding</keyword>
<keyword id="KW-0963">Cytoplasm</keyword>
<keyword id="KW-0436">Ligase</keyword>
<keyword id="KW-0547">Nucleotide-binding</keyword>
<keyword id="KW-0819">tRNA processing</keyword>
<name>TILS_AYWBP</name>
<protein>
    <recommendedName>
        <fullName evidence="1">tRNA(Ile)-lysidine synthase</fullName>
        <ecNumber evidence="1">6.3.4.19</ecNumber>
    </recommendedName>
    <alternativeName>
        <fullName evidence="1">tRNA(Ile)-2-lysyl-cytidine synthase</fullName>
    </alternativeName>
    <alternativeName>
        <fullName evidence="1">tRNA(Ile)-lysidine synthetase</fullName>
    </alternativeName>
</protein>
<feature type="chain" id="PRO_1000065601" description="tRNA(Ile)-lysidine synthase">
    <location>
        <begin position="1"/>
        <end position="436"/>
    </location>
</feature>
<feature type="binding site" evidence="1">
    <location>
        <begin position="21"/>
        <end position="26"/>
    </location>
    <ligand>
        <name>ATP</name>
        <dbReference type="ChEBI" id="CHEBI:30616"/>
    </ligand>
</feature>